<protein>
    <recommendedName>
        <fullName evidence="5">DNA double-strand break repair nuclease NurA</fullName>
        <ecNumber evidence="2">3.1.-.-</ecNumber>
    </recommendedName>
    <alternativeName>
        <fullName evidence="4">Nuclease repair of Archaea</fullName>
    </alternativeName>
</protein>
<evidence type="ECO:0000250" key="1">
    <source>
        <dbReference type="UniProtKB" id="Q8U1N8"/>
    </source>
</evidence>
<evidence type="ECO:0000269" key="2">
    <source>
    </source>
</evidence>
<evidence type="ECO:0000269" key="3">
    <source>
    </source>
</evidence>
<evidence type="ECO:0000303" key="4">
    <source>
    </source>
</evidence>
<evidence type="ECO:0000305" key="5"/>
<evidence type="ECO:0000312" key="6">
    <source>
        <dbReference type="EMBL" id="AAY79480.1"/>
    </source>
</evidence>
<keyword id="KW-0227">DNA damage</keyword>
<keyword id="KW-0234">DNA repair</keyword>
<keyword id="KW-0238">DNA-binding</keyword>
<keyword id="KW-0255">Endonuclease</keyword>
<keyword id="KW-0269">Exonuclease</keyword>
<keyword id="KW-0378">Hydrolase</keyword>
<keyword id="KW-0464">Manganese</keyword>
<keyword id="KW-0479">Metal-binding</keyword>
<keyword id="KW-0540">Nuclease</keyword>
<keyword id="KW-1185">Reference proteome</keyword>
<organism>
    <name type="scientific">Sulfolobus acidocaldarius (strain ATCC 33909 / DSM 639 / JCM 8929 / NBRC 15157 / NCIMB 11770)</name>
    <dbReference type="NCBI Taxonomy" id="330779"/>
    <lineage>
        <taxon>Archaea</taxon>
        <taxon>Thermoproteota</taxon>
        <taxon>Thermoprotei</taxon>
        <taxon>Sulfolobales</taxon>
        <taxon>Sulfolobaceae</taxon>
        <taxon>Sulfolobus</taxon>
    </lineage>
</organism>
<name>NURA_SULAC</name>
<dbReference type="EC" id="3.1.-.-" evidence="2"/>
<dbReference type="EMBL" id="AJ437617">
    <property type="protein sequence ID" value="CAD26846.1"/>
    <property type="molecule type" value="Genomic_DNA"/>
</dbReference>
<dbReference type="EMBL" id="CP000077">
    <property type="protein sequence ID" value="AAY79480.1"/>
    <property type="molecule type" value="Genomic_DNA"/>
</dbReference>
<dbReference type="RefSeq" id="WP_011276981.1">
    <property type="nucleotide sequence ID" value="NC_007181.1"/>
</dbReference>
<dbReference type="SMR" id="F2Z6F6"/>
<dbReference type="STRING" id="330779.Saci_0050"/>
<dbReference type="GeneID" id="14550582"/>
<dbReference type="GeneID" id="78440406"/>
<dbReference type="KEGG" id="sai:Saci_0050"/>
<dbReference type="PATRIC" id="fig|330779.12.peg.47"/>
<dbReference type="eggNOG" id="arCOG00367">
    <property type="taxonomic scope" value="Archaea"/>
</dbReference>
<dbReference type="HOGENOM" id="CLU_835811_0_0_2"/>
<dbReference type="Proteomes" id="UP000001018">
    <property type="component" value="Chromosome"/>
</dbReference>
<dbReference type="GO" id="GO:0004519">
    <property type="term" value="F:endonuclease activity"/>
    <property type="evidence" value="ECO:0007669"/>
    <property type="project" value="UniProtKB-KW"/>
</dbReference>
<dbReference type="GO" id="GO:0004527">
    <property type="term" value="F:exonuclease activity"/>
    <property type="evidence" value="ECO:0007669"/>
    <property type="project" value="UniProtKB-KW"/>
</dbReference>
<dbReference type="GO" id="GO:0046872">
    <property type="term" value="F:metal ion binding"/>
    <property type="evidence" value="ECO:0007669"/>
    <property type="project" value="UniProtKB-KW"/>
</dbReference>
<dbReference type="GO" id="GO:0006281">
    <property type="term" value="P:DNA repair"/>
    <property type="evidence" value="ECO:0007669"/>
    <property type="project" value="UniProtKB-KW"/>
</dbReference>
<dbReference type="InterPro" id="IPR053461">
    <property type="entry name" value="DSB_repair_nuclease_NurA"/>
</dbReference>
<dbReference type="InterPro" id="IPR018977">
    <property type="entry name" value="NurA_domain"/>
</dbReference>
<dbReference type="NCBIfam" id="NF041033">
    <property type="entry name" value="NurA_Sulf"/>
    <property type="match status" value="1"/>
</dbReference>
<dbReference type="Pfam" id="PF09376">
    <property type="entry name" value="NurA"/>
    <property type="match status" value="1"/>
</dbReference>
<dbReference type="SMART" id="SM00933">
    <property type="entry name" value="NurA"/>
    <property type="match status" value="1"/>
</dbReference>
<feature type="chain" id="PRO_0000434028" description="DNA double-strand break repair nuclease NurA">
    <location>
        <begin position="1"/>
        <end position="332"/>
    </location>
</feature>
<feature type="binding site" evidence="1">
    <location>
        <position position="57"/>
    </location>
    <ligand>
        <name>Mn(2+)</name>
        <dbReference type="ChEBI" id="CHEBI:29035"/>
    </ligand>
</feature>
<feature type="binding site" evidence="1">
    <location>
        <position position="132"/>
    </location>
    <ligand>
        <name>Mn(2+)</name>
        <dbReference type="ChEBI" id="CHEBI:29035"/>
    </ligand>
</feature>
<sequence>MIDKAYEELIKMKEKIMRDSYTIHKELSESVESILNELWINYSPESVEHSKKLLAIDGGMWVKETRQGVIFIVNAKAIVFEGINEINSEGKVLVHIFSPGNYAKERIELLMQLLELQLALKLVENVDYVLLDGSFSKKLGRHKSELKVDLLDDIVSIDKILSLEEKDEDNMLRFLIAENQLVLSELVSRYKDKLLFISKNSKSSDLFKQAYSDITILELFTQNCGYSKILEKKIDENYILSRKASKLLSGLNYYFTNLRLEPSERLFRLDFFNADKIFEYLKVLKPVSLKGYPYPLIKVHKDVRVGKEDRERIYSILEMKRKDISWWPSQFY</sequence>
<comment type="function">
    <text evidence="1 2">Involved in DNA double-strand break (DSB) repair (PubMed:12052775). Probably acts with HerA to stimulate resection of the 5' strand and produce the long 3' single-strand that is required for RadA loading (By similarity). Exhibits both single-stranded endonuclease activity and 5'-3' exonuclease activity on single-stranded and double-stranded DNA (PubMed:12052775).</text>
</comment>
<comment type="cofactor">
    <cofactor evidence="2">
        <name>Mn(2+)</name>
        <dbReference type="ChEBI" id="CHEBI:29035"/>
    </cofactor>
</comment>
<comment type="induction">
    <text evidence="3">Part of the nurA-rad50-mre11-herA operon, these genes are cotranscribed.</text>
</comment>
<comment type="similarity">
    <text evidence="5">Belongs to the NurA family.</text>
</comment>
<accession>F2Z6F6</accession>
<accession>Q4JCJ9</accession>
<accession>Q8NKP9</accession>
<reference key="1">
    <citation type="journal article" date="2002" name="EMBO Rep.">
        <title>NurA, a novel 5'-3' nuclease gene linked to rad50 and mre11 homologs of thermophilic Archaea.</title>
        <authorList>
            <person name="Constantinesco F."/>
            <person name="Forterre P."/>
            <person name="Elie C."/>
        </authorList>
    </citation>
    <scope>NUCLEOTIDE SEQUENCE [GENOMIC DNA]</scope>
    <scope>FUNCTION AS A NUCLEASE</scope>
    <scope>COFACTOR</scope>
    <source>
        <strain>ATCC 33909 / DSM 639 / JCM 8929 / NBRC 15157 / NCIMB 11770</strain>
    </source>
</reference>
<reference key="2">
    <citation type="journal article" date="2005" name="J. Bacteriol.">
        <title>The genome of Sulfolobus acidocaldarius, a model organism of the Crenarchaeota.</title>
        <authorList>
            <person name="Chen L."/>
            <person name="Bruegger K."/>
            <person name="Skovgaard M."/>
            <person name="Redder P."/>
            <person name="She Q."/>
            <person name="Torarinsson E."/>
            <person name="Greve B."/>
            <person name="Awayez M."/>
            <person name="Zibat A."/>
            <person name="Klenk H.-P."/>
            <person name="Garrett R.A."/>
        </authorList>
    </citation>
    <scope>NUCLEOTIDE SEQUENCE [LARGE SCALE GENOMIC DNA]</scope>
    <source>
        <strain>ATCC 33909 / DSM 639 / JCM 8929 / NBRC 15157 / NCIMB 11770</strain>
    </source>
</reference>
<reference key="3">
    <citation type="journal article" date="2004" name="Nucleic Acids Res.">
        <title>A bipolar DNA helicase gene, herA, clusters with rad50, mre11 and nurA genes in thermophilic archaea.</title>
        <authorList>
            <person name="Constantinesco F."/>
            <person name="Forterre P."/>
            <person name="Koonin E.V."/>
            <person name="Aravind L."/>
            <person name="Elie C."/>
        </authorList>
    </citation>
    <scope>INDUCTION</scope>
    <source>
        <strain>ATCC 33909 / DSM 639 / JCM 8929 / NBRC 15157 / NCIMB 11770</strain>
    </source>
</reference>
<proteinExistence type="evidence at protein level"/>
<gene>
    <name evidence="4" type="primary">nurA</name>
    <name evidence="4" type="synonym">p39</name>
    <name evidence="6" type="ordered locus">Saci_0050</name>
</gene>